<reference key="1">
    <citation type="journal article" date="1986" name="Mol. Cell. Biol.">
        <title>Identification of a nonhistone chromosomal protein associated with heterochromatin in Drosophila melanogaster and its gene.</title>
        <authorList>
            <person name="James T.C."/>
            <person name="Elgin S.C.R."/>
        </authorList>
    </citation>
    <scope>NUCLEOTIDE SEQUENCE [MRNA]</scope>
</reference>
<reference key="2">
    <citation type="journal article" date="1990" name="Proc. Natl. Acad. Sci. U.S.A.">
        <title>Mutation in a heterochromatin-specific chromosomal protein is associated with suppression of position-effect variegation in Drosophila melanogaster.</title>
        <authorList>
            <person name="Eissenberg J.C."/>
            <person name="James T.C."/>
            <person name="Forster-Hartnett D.W."/>
            <person name="Hartnett T."/>
            <person name="Ngan V."/>
            <person name="Elgin S.C.R."/>
        </authorList>
    </citation>
    <scope>NUCLEOTIDE SEQUENCE [GENOMIC DNA]</scope>
    <scope>SEQUENCE REVISION</scope>
</reference>
<reference key="3">
    <citation type="journal article" date="2009" name="Genetics">
        <title>Molecular population genetics and evolution of Drosophila meiosis genes.</title>
        <authorList>
            <person name="Anderson J.A."/>
            <person name="Gilliland W.D."/>
            <person name="Langley C.H."/>
        </authorList>
    </citation>
    <scope>NUCLEOTIDE SEQUENCE [GENOMIC DNA]</scope>
    <scope>VARIANTS ALA-105; CYS-126 AND SER-134</scope>
    <source>
        <strain>MW11</strain>
        <strain>MW25</strain>
        <strain>MW27</strain>
        <strain>MW38</strain>
        <strain>MW56</strain>
        <strain>MW6</strain>
        <strain>MW63</strain>
        <strain>MW9</strain>
        <strain>NC301</strain>
        <strain>NC303</strain>
        <strain>NC304</strain>
        <strain>NC306</strain>
        <strain>NC319</strain>
        <strain>NC322</strain>
        <strain>NC335</strain>
        <strain>NC336</strain>
        <strain>NC350</strain>
        <strain>NC357</strain>
        <strain>NC358</strain>
        <strain>NC359</strain>
        <strain>NC361</strain>
        <strain>NC362</strain>
        <strain>NC375</strain>
        <strain>NC390</strain>
        <strain>NC397</strain>
        <strain>NC399</strain>
        <strain>NC732</strain>
        <strain>NC740</strain>
        <strain>NC774</strain>
    </source>
</reference>
<reference key="4">
    <citation type="journal article" date="2000" name="Science">
        <title>The genome sequence of Drosophila melanogaster.</title>
        <authorList>
            <person name="Adams M.D."/>
            <person name="Celniker S.E."/>
            <person name="Holt R.A."/>
            <person name="Evans C.A."/>
            <person name="Gocayne J.D."/>
            <person name="Amanatides P.G."/>
            <person name="Scherer S.E."/>
            <person name="Li P.W."/>
            <person name="Hoskins R.A."/>
            <person name="Galle R.F."/>
            <person name="George R.A."/>
            <person name="Lewis S.E."/>
            <person name="Richards S."/>
            <person name="Ashburner M."/>
            <person name="Henderson S.N."/>
            <person name="Sutton G.G."/>
            <person name="Wortman J.R."/>
            <person name="Yandell M.D."/>
            <person name="Zhang Q."/>
            <person name="Chen L.X."/>
            <person name="Brandon R.C."/>
            <person name="Rogers Y.-H.C."/>
            <person name="Blazej R.G."/>
            <person name="Champe M."/>
            <person name="Pfeiffer B.D."/>
            <person name="Wan K.H."/>
            <person name="Doyle C."/>
            <person name="Baxter E.G."/>
            <person name="Helt G."/>
            <person name="Nelson C.R."/>
            <person name="Miklos G.L.G."/>
            <person name="Abril J.F."/>
            <person name="Agbayani A."/>
            <person name="An H.-J."/>
            <person name="Andrews-Pfannkoch C."/>
            <person name="Baldwin D."/>
            <person name="Ballew R.M."/>
            <person name="Basu A."/>
            <person name="Baxendale J."/>
            <person name="Bayraktaroglu L."/>
            <person name="Beasley E.M."/>
            <person name="Beeson K.Y."/>
            <person name="Benos P.V."/>
            <person name="Berman B.P."/>
            <person name="Bhandari D."/>
            <person name="Bolshakov S."/>
            <person name="Borkova D."/>
            <person name="Botchan M.R."/>
            <person name="Bouck J."/>
            <person name="Brokstein P."/>
            <person name="Brottier P."/>
            <person name="Burtis K.C."/>
            <person name="Busam D.A."/>
            <person name="Butler H."/>
            <person name="Cadieu E."/>
            <person name="Center A."/>
            <person name="Chandra I."/>
            <person name="Cherry J.M."/>
            <person name="Cawley S."/>
            <person name="Dahlke C."/>
            <person name="Davenport L.B."/>
            <person name="Davies P."/>
            <person name="de Pablos B."/>
            <person name="Delcher A."/>
            <person name="Deng Z."/>
            <person name="Mays A.D."/>
            <person name="Dew I."/>
            <person name="Dietz S.M."/>
            <person name="Dodson K."/>
            <person name="Doup L.E."/>
            <person name="Downes M."/>
            <person name="Dugan-Rocha S."/>
            <person name="Dunkov B.C."/>
            <person name="Dunn P."/>
            <person name="Durbin K.J."/>
            <person name="Evangelista C.C."/>
            <person name="Ferraz C."/>
            <person name="Ferriera S."/>
            <person name="Fleischmann W."/>
            <person name="Fosler C."/>
            <person name="Gabrielian A.E."/>
            <person name="Garg N.S."/>
            <person name="Gelbart W.M."/>
            <person name="Glasser K."/>
            <person name="Glodek A."/>
            <person name="Gong F."/>
            <person name="Gorrell J.H."/>
            <person name="Gu Z."/>
            <person name="Guan P."/>
            <person name="Harris M."/>
            <person name="Harris N.L."/>
            <person name="Harvey D.A."/>
            <person name="Heiman T.J."/>
            <person name="Hernandez J.R."/>
            <person name="Houck J."/>
            <person name="Hostin D."/>
            <person name="Houston K.A."/>
            <person name="Howland T.J."/>
            <person name="Wei M.-H."/>
            <person name="Ibegwam C."/>
            <person name="Jalali M."/>
            <person name="Kalush F."/>
            <person name="Karpen G.H."/>
            <person name="Ke Z."/>
            <person name="Kennison J.A."/>
            <person name="Ketchum K.A."/>
            <person name="Kimmel B.E."/>
            <person name="Kodira C.D."/>
            <person name="Kraft C.L."/>
            <person name="Kravitz S."/>
            <person name="Kulp D."/>
            <person name="Lai Z."/>
            <person name="Lasko P."/>
            <person name="Lei Y."/>
            <person name="Levitsky A.A."/>
            <person name="Li J.H."/>
            <person name="Li Z."/>
            <person name="Liang Y."/>
            <person name="Lin X."/>
            <person name="Liu X."/>
            <person name="Mattei B."/>
            <person name="McIntosh T.C."/>
            <person name="McLeod M.P."/>
            <person name="McPherson D."/>
            <person name="Merkulov G."/>
            <person name="Milshina N.V."/>
            <person name="Mobarry C."/>
            <person name="Morris J."/>
            <person name="Moshrefi A."/>
            <person name="Mount S.M."/>
            <person name="Moy M."/>
            <person name="Murphy B."/>
            <person name="Murphy L."/>
            <person name="Muzny D.M."/>
            <person name="Nelson D.L."/>
            <person name="Nelson D.R."/>
            <person name="Nelson K.A."/>
            <person name="Nixon K."/>
            <person name="Nusskern D.R."/>
            <person name="Pacleb J.M."/>
            <person name="Palazzolo M."/>
            <person name="Pittman G.S."/>
            <person name="Pan S."/>
            <person name="Pollard J."/>
            <person name="Puri V."/>
            <person name="Reese M.G."/>
            <person name="Reinert K."/>
            <person name="Remington K."/>
            <person name="Saunders R.D.C."/>
            <person name="Scheeler F."/>
            <person name="Shen H."/>
            <person name="Shue B.C."/>
            <person name="Siden-Kiamos I."/>
            <person name="Simpson M."/>
            <person name="Skupski M.P."/>
            <person name="Smith T.J."/>
            <person name="Spier E."/>
            <person name="Spradling A.C."/>
            <person name="Stapleton M."/>
            <person name="Strong R."/>
            <person name="Sun E."/>
            <person name="Svirskas R."/>
            <person name="Tector C."/>
            <person name="Turner R."/>
            <person name="Venter E."/>
            <person name="Wang A.H."/>
            <person name="Wang X."/>
            <person name="Wang Z.-Y."/>
            <person name="Wassarman D.A."/>
            <person name="Weinstock G.M."/>
            <person name="Weissenbach J."/>
            <person name="Williams S.M."/>
            <person name="Woodage T."/>
            <person name="Worley K.C."/>
            <person name="Wu D."/>
            <person name="Yang S."/>
            <person name="Yao Q.A."/>
            <person name="Ye J."/>
            <person name="Yeh R.-F."/>
            <person name="Zaveri J.S."/>
            <person name="Zhan M."/>
            <person name="Zhang G."/>
            <person name="Zhao Q."/>
            <person name="Zheng L."/>
            <person name="Zheng X.H."/>
            <person name="Zhong F.N."/>
            <person name="Zhong W."/>
            <person name="Zhou X."/>
            <person name="Zhu S.C."/>
            <person name="Zhu X."/>
            <person name="Smith H.O."/>
            <person name="Gibbs R.A."/>
            <person name="Myers E.W."/>
            <person name="Rubin G.M."/>
            <person name="Venter J.C."/>
        </authorList>
    </citation>
    <scope>NUCLEOTIDE SEQUENCE [LARGE SCALE GENOMIC DNA]</scope>
    <source>
        <strain>Berkeley</strain>
    </source>
</reference>
<reference key="5">
    <citation type="journal article" date="2002" name="Genome Biol.">
        <title>Annotation of the Drosophila melanogaster euchromatic genome: a systematic review.</title>
        <authorList>
            <person name="Misra S."/>
            <person name="Crosby M.A."/>
            <person name="Mungall C.J."/>
            <person name="Matthews B.B."/>
            <person name="Campbell K.S."/>
            <person name="Hradecky P."/>
            <person name="Huang Y."/>
            <person name="Kaminker J.S."/>
            <person name="Millburn G.H."/>
            <person name="Prochnik S.E."/>
            <person name="Smith C.D."/>
            <person name="Tupy J.L."/>
            <person name="Whitfield E.J."/>
            <person name="Bayraktaroglu L."/>
            <person name="Berman B.P."/>
            <person name="Bettencourt B.R."/>
            <person name="Celniker S.E."/>
            <person name="de Grey A.D.N.J."/>
            <person name="Drysdale R.A."/>
            <person name="Harris N.L."/>
            <person name="Richter J."/>
            <person name="Russo S."/>
            <person name="Schroeder A.J."/>
            <person name="Shu S.Q."/>
            <person name="Stapleton M."/>
            <person name="Yamada C."/>
            <person name="Ashburner M."/>
            <person name="Gelbart W.M."/>
            <person name="Rubin G.M."/>
            <person name="Lewis S.E."/>
        </authorList>
    </citation>
    <scope>GENOME REANNOTATION</scope>
    <source>
        <strain>Berkeley</strain>
    </source>
</reference>
<reference key="6">
    <citation type="journal article" date="2002" name="Genome Biol.">
        <title>A Drosophila full-length cDNA resource.</title>
        <authorList>
            <person name="Stapleton M."/>
            <person name="Carlson J.W."/>
            <person name="Brokstein P."/>
            <person name="Yu C."/>
            <person name="Champe M."/>
            <person name="George R.A."/>
            <person name="Guarin H."/>
            <person name="Kronmiller B."/>
            <person name="Pacleb J.M."/>
            <person name="Park S."/>
            <person name="Wan K.H."/>
            <person name="Rubin G.M."/>
            <person name="Celniker S.E."/>
        </authorList>
    </citation>
    <scope>NUCLEOTIDE SEQUENCE [LARGE SCALE MRNA]</scope>
    <source>
        <strain>Berkeley</strain>
        <tissue>Embryo</tissue>
    </source>
</reference>
<reference key="7">
    <citation type="journal article" date="1991" name="Nucleic Acids Res.">
        <title>A sequence motif found in a Drosophila heterochromatin protein is conserved in animals and plants.</title>
        <authorList>
            <person name="Singh P.B."/>
            <person name="Miller J.R."/>
            <person name="Pearce J."/>
            <person name="Kothary R."/>
            <person name="Burton R.D."/>
            <person name="Paro R."/>
            <person name="James T.C."/>
            <person name="Gaunt S.J."/>
        </authorList>
    </citation>
    <scope>DOMAIN CHROMO</scope>
</reference>
<reference key="8">
    <citation type="journal article" date="1997" name="J. Cell Sci.">
        <title>An actin-related protein in Drosophila colocalizes with heterochromatin protein 1 in pericentric heterochromatin.</title>
        <authorList>
            <person name="Frankel S."/>
            <person name="Sigel E.A."/>
            <person name="Craig C."/>
            <person name="Elgin S.C."/>
            <person name="Mooseker M.S."/>
            <person name="Artavanis-Tsakonas S."/>
        </authorList>
    </citation>
    <scope>SUBCELLULAR LOCATION</scope>
</reference>
<reference key="9">
    <citation type="journal article" date="2001" name="EMBO J.">
        <title>Specificity of the HP1 chromo domain for the methylated N-terminus of histone H3.</title>
        <authorList>
            <person name="Jacobs S.A."/>
            <person name="Taverna S.D."/>
            <person name="Zhang Y."/>
            <person name="Briggs S.D."/>
            <person name="Li J."/>
            <person name="Eissenberg J.C."/>
            <person name="Allis C.D."/>
            <person name="Khorasanizadeh S."/>
        </authorList>
    </citation>
    <scope>FUNCTION</scope>
    <scope>MUTAGENESIS OF VAL-26</scope>
</reference>
<reference key="10">
    <citation type="journal article" date="2001" name="Mol. Biol. Cell">
        <title>Drosophila heterochromatin protein 1 (HP1)/origin recognition complex (ORC) protein is associated with HP1 and ORC and functions in heterochromatin-induced silencing.</title>
        <authorList>
            <person name="Shareef M.M."/>
            <person name="King C."/>
            <person name="Damaj M."/>
            <person name="Badagu R."/>
            <person name="Huang D.W."/>
            <person name="Kellum R."/>
        </authorList>
    </citation>
    <scope>INTERACTION WITH CAV</scope>
</reference>
<reference key="11">
    <citation type="journal article" date="2002" name="EMBO J.">
        <title>Central role of Drosophila SU(VAR)3-9 in histone H3-K9 methylation and heterochromatic gene silencing.</title>
        <authorList>
            <person name="Schotta G."/>
            <person name="Ebert A."/>
            <person name="Krauss V."/>
            <person name="Fischer A."/>
            <person name="Hoffmann J."/>
            <person name="Rea S."/>
            <person name="Jenuwein T."/>
            <person name="Dorn R."/>
            <person name="Reuter G."/>
        </authorList>
    </citation>
    <scope>INTERACTION WITH SU(VAR)39</scope>
</reference>
<reference key="12">
    <citation type="journal article" date="2003" name="J. Biol. Chem.">
        <title>Novel Drosophila heterochromatin protein 1 (HP1)/origin recognition complex-associated protein (HOAP) repeat motif in HP1/HOAP interactions and chromocenter associations.</title>
        <authorList>
            <person name="Badugu R."/>
            <person name="Shareef M.M."/>
            <person name="Kellum R."/>
        </authorList>
    </citation>
    <scope>INTERACTION WITH CAV</scope>
    <scope>SUBCELLULAR LOCATION</scope>
</reference>
<reference key="13">
    <citation type="journal article" date="2003" name="Nat. Cell Biol.">
        <title>The Drosophila HOAP protein is required for telomere capping.</title>
        <authorList>
            <person name="Cenci G."/>
            <person name="Siriaco G."/>
            <person name="Raffa G.D."/>
            <person name="Kellum R."/>
            <person name="Gatti M."/>
        </authorList>
    </citation>
    <scope>FUNCTION</scope>
</reference>
<reference key="14">
    <citation type="journal article" date="2003" name="Mol. Biol. Cell">
        <title>Drosophila MCM10 interacts with members of the prereplication complex and is required for proper chromosome condensation.</title>
        <authorList>
            <person name="Christensen T.W."/>
            <person name="Tye B.K."/>
        </authorList>
    </citation>
    <scope>INTERACTION WITH MCM10</scope>
</reference>
<reference key="15">
    <citation type="journal article" date="2007" name="Genes Dev.">
        <title>Drosophila PIWI associates with chromatin and interacts directly with HP1a.</title>
        <authorList>
            <person name="Brower-Toland B."/>
            <person name="Findley S.D."/>
            <person name="Jiang L."/>
            <person name="Liu L."/>
            <person name="Yin H."/>
            <person name="Dus M."/>
            <person name="Zhou P."/>
            <person name="Elgin S.C."/>
            <person name="Lin H."/>
        </authorList>
    </citation>
    <scope>INTERACTION WITH PIWI</scope>
    <scope>SUBUNIT</scope>
    <scope>SUBCELLULAR LOCATION</scope>
    <scope>MUTAGENESIS OF VAL-26; ILE-191 AND TRP-200</scope>
</reference>
<reference key="16">
    <citation type="journal article" date="2007" name="Mol. Biosyst.">
        <title>An integrated chemical, mass spectrometric and computational strategy for (quantitative) phosphoproteomics: application to Drosophila melanogaster Kc167 cells.</title>
        <authorList>
            <person name="Bodenmiller B."/>
            <person name="Mueller L.N."/>
            <person name="Pedrioli P.G.A."/>
            <person name="Pflieger D."/>
            <person name="Juenger M.A."/>
            <person name="Eng J.K."/>
            <person name="Aebersold R."/>
            <person name="Tao W.A."/>
        </authorList>
    </citation>
    <scope>PHOSPHORYLATION [LARGE SCALE ANALYSIS] AT SER-15; THR-127; THR-128 AND THR-134</scope>
    <scope>IDENTIFICATION BY MASS SPECTROMETRY</scope>
</reference>
<reference key="17">
    <citation type="journal article" date="2008" name="J. Proteome Res.">
        <title>Phosphoproteome analysis of Drosophila melanogaster embryos.</title>
        <authorList>
            <person name="Zhai B."/>
            <person name="Villen J."/>
            <person name="Beausoleil S.A."/>
            <person name="Mintseris J."/>
            <person name="Gygi S.P."/>
        </authorList>
    </citation>
    <scope>PHOSPHORYLATION [LARGE SCALE ANALYSIS] AT SER-11; SER-15; SER-102; SER-103; SER-113 AND THR-128</scope>
    <scope>IDENTIFICATION BY MASS SPECTROMETRY</scope>
    <source>
        <tissue>Embryo</tissue>
    </source>
</reference>
<reference key="18">
    <citation type="journal article" date="2009" name="J. Cell Sci.">
        <title>A product of the bicistronic Drosophila melanogaster gene CG31241, which also encodes a trimethylguanosine synthase, plays a role in telomere protection.</title>
        <authorList>
            <person name="Komonyi O."/>
            <person name="Schauer T."/>
            <person name="Papai G."/>
            <person name="Deak P."/>
            <person name="Boros I.M."/>
        </authorList>
    </citation>
    <scope>SUBCELLULAR LOCATION</scope>
</reference>
<reference key="19">
    <citation type="journal article" date="2009" name="Proc. Natl. Acad. Sci. U.S.A.">
        <title>The Drosophila modigliani (moi) gene encodes a HOAP-interacting protein required for telomere protection.</title>
        <authorList>
            <person name="Raffa G.D."/>
            <person name="Siriaco G."/>
            <person name="Cugusi S."/>
            <person name="Ciapponi L."/>
            <person name="Cenci G."/>
            <person name="Wojcik E."/>
            <person name="Gatti M."/>
        </authorList>
    </citation>
    <scope>INTERACTION WITH CAV AND MOI</scope>
    <scope>SUBCELLULAR LOCATION</scope>
</reference>
<reference key="20">
    <citation type="journal article" date="2010" name="EMBO J.">
        <title>HipHop interacts with HOAP and HP1 to protect Drosophila telomeres in a sequence-independent manner.</title>
        <authorList>
            <person name="Gao G."/>
            <person name="Walser J.C."/>
            <person name="Beaucher M.L."/>
            <person name="Morciano P."/>
            <person name="Wesolowska N."/>
            <person name="Chen J."/>
            <person name="Rong Y.S."/>
        </authorList>
    </citation>
    <scope>FUNCTION</scope>
    <scope>IDENTIFICATION IN THE HIPHOP-HOAP COMPLEX</scope>
    <scope>INTERACTION WITH HIPHOP AND CAV</scope>
    <scope>IDENTIFICATION BY MASS SPECTROMETRY</scope>
</reference>
<reference key="21">
    <citation type="journal article" date="2010" name="Genes Dev.">
        <title>Verrocchio, a Drosophila OB fold-containing protein, is a component of the terminin telomere-capping complex.</title>
        <authorList>
            <person name="Raffa G.D."/>
            <person name="Raimondo D."/>
            <person name="Sorino C."/>
            <person name="Cugusi S."/>
            <person name="Cenci G."/>
            <person name="Cacchione S."/>
            <person name="Gatti M."/>
            <person name="Ciapponi L."/>
        </authorList>
    </citation>
    <scope>SUBCELLULAR LOCATION</scope>
</reference>
<reference key="22">
    <citation type="journal article" date="2015" name="PLoS Genet.">
        <title>The Analysis of Pendolino (peo) Mutants Reveals Differences in the Fusigenic Potential among Drosophila Telomeres.</title>
        <authorList>
            <person name="Cenci G."/>
            <person name="Ciapponi L."/>
            <person name="Marzullo M."/>
            <person name="Raffa G.D."/>
            <person name="Morciano P."/>
            <person name="Raimondo D."/>
            <person name="Burla R."/>
            <person name="Saggio I."/>
            <person name="Gatti M."/>
        </authorList>
    </citation>
    <scope>SUBCELLULAR LOCATION</scope>
</reference>
<reference evidence="21" key="23">
    <citation type="journal article" date="2015" name="PLoS Genet.">
        <title>An Interaction between RRP6 and SU(VAR)3-9 Targets RRP6 to Heterochromatin and Contributes to Heterochromatin Maintenance in Drosophila melanogaster.</title>
        <authorList>
            <person name="Eberle A.B."/>
            <person name="Jordan-Pla A."/>
            <person name="Ganez-Zapater A."/>
            <person name="Hessle V."/>
            <person name="Silberberg G."/>
            <person name="von Euler A."/>
            <person name="Silverstein R.A."/>
            <person name="Visa N."/>
        </authorList>
    </citation>
    <scope>FUNCTION</scope>
    <scope>INTERACTION WITH RRP6</scope>
    <scope>SUBCELLULAR LOCATION</scope>
    <scope>TISSUE SPECIFICITY</scope>
</reference>
<reference evidence="24 25" key="24">
    <citation type="journal article" date="2002" name="Science">
        <title>Structure of HP1 chromodomain bound to a lysine 9-methylated histone H3 tail.</title>
        <authorList>
            <person name="Jacobs S.A."/>
            <person name="Khorasanizadeh S."/>
        </authorList>
    </citation>
    <scope>X-RAY CRYSTALLOGRAPHY (2.1 ANGSTROMS) OF 17-76 IN COMPLEX WITH HIS3 N-TERMINAL TAIL</scope>
    <scope>FUNCTION</scope>
</reference>
<dbReference type="EMBL" id="M57574">
    <property type="protein sequence ID" value="AAA28620.1"/>
    <property type="molecule type" value="Genomic_DNA"/>
</dbReference>
<dbReference type="EMBL" id="M14131">
    <property type="protein sequence ID" value="AAA28402.1"/>
    <property type="status" value="ALT_SEQ"/>
    <property type="molecule type" value="mRNA"/>
</dbReference>
<dbReference type="EMBL" id="FJ218607">
    <property type="protein sequence ID" value="ACI96755.1"/>
    <property type="molecule type" value="Genomic_DNA"/>
</dbReference>
<dbReference type="EMBL" id="FJ218612">
    <property type="protein sequence ID" value="ACI96760.1"/>
    <property type="molecule type" value="Genomic_DNA"/>
</dbReference>
<dbReference type="EMBL" id="FJ218613">
    <property type="protein sequence ID" value="ACI96761.1"/>
    <property type="molecule type" value="Genomic_DNA"/>
</dbReference>
<dbReference type="EMBL" id="FJ218614">
    <property type="protein sequence ID" value="ACI96762.1"/>
    <property type="molecule type" value="Genomic_DNA"/>
</dbReference>
<dbReference type="EMBL" id="FJ218615">
    <property type="protein sequence ID" value="ACI96763.1"/>
    <property type="molecule type" value="Genomic_DNA"/>
</dbReference>
<dbReference type="EMBL" id="FJ218616">
    <property type="protein sequence ID" value="ACI96764.1"/>
    <property type="molecule type" value="Genomic_DNA"/>
</dbReference>
<dbReference type="EMBL" id="FJ218617">
    <property type="protein sequence ID" value="ACI96765.1"/>
    <property type="molecule type" value="Genomic_DNA"/>
</dbReference>
<dbReference type="EMBL" id="FJ218618">
    <property type="protein sequence ID" value="ACI96766.1"/>
    <property type="molecule type" value="Genomic_DNA"/>
</dbReference>
<dbReference type="EMBL" id="FJ218619">
    <property type="protein sequence ID" value="ACI96767.1"/>
    <property type="molecule type" value="Genomic_DNA"/>
</dbReference>
<dbReference type="EMBL" id="FJ218620">
    <property type="protein sequence ID" value="ACI96768.1"/>
    <property type="molecule type" value="Genomic_DNA"/>
</dbReference>
<dbReference type="EMBL" id="FJ218621">
    <property type="protein sequence ID" value="ACI96769.1"/>
    <property type="molecule type" value="Genomic_DNA"/>
</dbReference>
<dbReference type="EMBL" id="FJ218622">
    <property type="protein sequence ID" value="ACI96770.1"/>
    <property type="molecule type" value="Genomic_DNA"/>
</dbReference>
<dbReference type="EMBL" id="FJ218623">
    <property type="protein sequence ID" value="ACI96771.1"/>
    <property type="molecule type" value="Genomic_DNA"/>
</dbReference>
<dbReference type="EMBL" id="FJ218624">
    <property type="protein sequence ID" value="ACI96772.1"/>
    <property type="molecule type" value="Genomic_DNA"/>
</dbReference>
<dbReference type="EMBL" id="FJ218625">
    <property type="protein sequence ID" value="ACI96773.1"/>
    <property type="molecule type" value="Genomic_DNA"/>
</dbReference>
<dbReference type="EMBL" id="FJ218626">
    <property type="protein sequence ID" value="ACI96774.1"/>
    <property type="molecule type" value="Genomic_DNA"/>
</dbReference>
<dbReference type="EMBL" id="FJ218627">
    <property type="protein sequence ID" value="ACI96775.1"/>
    <property type="molecule type" value="Genomic_DNA"/>
</dbReference>
<dbReference type="EMBL" id="FJ218628">
    <property type="protein sequence ID" value="ACI96776.1"/>
    <property type="molecule type" value="Genomic_DNA"/>
</dbReference>
<dbReference type="EMBL" id="FJ218629">
    <property type="protein sequence ID" value="ACI96777.1"/>
    <property type="molecule type" value="Genomic_DNA"/>
</dbReference>
<dbReference type="EMBL" id="FJ218630">
    <property type="protein sequence ID" value="ACI96778.1"/>
    <property type="molecule type" value="Genomic_DNA"/>
</dbReference>
<dbReference type="EMBL" id="FJ218631">
    <property type="protein sequence ID" value="ACI96779.1"/>
    <property type="molecule type" value="Genomic_DNA"/>
</dbReference>
<dbReference type="EMBL" id="FJ218632">
    <property type="protein sequence ID" value="ACI96780.1"/>
    <property type="molecule type" value="Genomic_DNA"/>
</dbReference>
<dbReference type="EMBL" id="FJ218633">
    <property type="protein sequence ID" value="ACI96781.1"/>
    <property type="molecule type" value="Genomic_DNA"/>
</dbReference>
<dbReference type="EMBL" id="FJ218634">
    <property type="protein sequence ID" value="ACI96782.1"/>
    <property type="molecule type" value="Genomic_DNA"/>
</dbReference>
<dbReference type="EMBL" id="FJ218635">
    <property type="protein sequence ID" value="ACI96783.1"/>
    <property type="molecule type" value="Genomic_DNA"/>
</dbReference>
<dbReference type="EMBL" id="FJ218636">
    <property type="protein sequence ID" value="ACI96784.1"/>
    <property type="molecule type" value="Genomic_DNA"/>
</dbReference>
<dbReference type="EMBL" id="FJ218637">
    <property type="protein sequence ID" value="ACI96785.1"/>
    <property type="molecule type" value="Genomic_DNA"/>
</dbReference>
<dbReference type="EMBL" id="FJ218638">
    <property type="protein sequence ID" value="ACI96786.1"/>
    <property type="molecule type" value="Genomic_DNA"/>
</dbReference>
<dbReference type="EMBL" id="FJ218639">
    <property type="protein sequence ID" value="ACI96787.1"/>
    <property type="molecule type" value="Genomic_DNA"/>
</dbReference>
<dbReference type="EMBL" id="AE014134">
    <property type="protein sequence ID" value="AAF52618.1"/>
    <property type="molecule type" value="Genomic_DNA"/>
</dbReference>
<dbReference type="EMBL" id="AE014134">
    <property type="protein sequence ID" value="AAN11156.1"/>
    <property type="molecule type" value="Genomic_DNA"/>
</dbReference>
<dbReference type="EMBL" id="AY061119">
    <property type="protein sequence ID" value="AAL28667.1"/>
    <property type="molecule type" value="mRNA"/>
</dbReference>
<dbReference type="PIR" id="A39268">
    <property type="entry name" value="A39268"/>
</dbReference>
<dbReference type="RefSeq" id="NP_476755.1">
    <property type="nucleotide sequence ID" value="NM_057407.4"/>
</dbReference>
<dbReference type="RefSeq" id="NP_723361.1">
    <property type="nucleotide sequence ID" value="NM_164799.2"/>
</dbReference>
<dbReference type="PDB" id="1KNA">
    <property type="method" value="X-ray"/>
    <property type="resolution" value="2.10 A"/>
    <property type="chains" value="A=17-76"/>
</dbReference>
<dbReference type="PDB" id="1KNE">
    <property type="method" value="X-ray"/>
    <property type="resolution" value="2.40 A"/>
    <property type="chains" value="A=17-76"/>
</dbReference>
<dbReference type="PDB" id="1Q3L">
    <property type="method" value="X-ray"/>
    <property type="resolution" value="1.64 A"/>
    <property type="chains" value="A=17-76"/>
</dbReference>
<dbReference type="PDB" id="3P7J">
    <property type="method" value="X-ray"/>
    <property type="resolution" value="2.30 A"/>
    <property type="chains" value="A/B=131-206"/>
</dbReference>
<dbReference type="PDB" id="6ASZ">
    <property type="method" value="X-ray"/>
    <property type="resolution" value="1.52 A"/>
    <property type="chains" value="A=17-76"/>
</dbReference>
<dbReference type="PDB" id="6AT0">
    <property type="method" value="X-ray"/>
    <property type="resolution" value="1.28 A"/>
    <property type="chains" value="A=17-76"/>
</dbReference>
<dbReference type="PDB" id="6MHA">
    <property type="method" value="X-ray"/>
    <property type="resolution" value="1.50 A"/>
    <property type="chains" value="A=22-74"/>
</dbReference>
<dbReference type="PDBsum" id="1KNA"/>
<dbReference type="PDBsum" id="1KNE"/>
<dbReference type="PDBsum" id="1Q3L"/>
<dbReference type="PDBsum" id="3P7J"/>
<dbReference type="PDBsum" id="6ASZ"/>
<dbReference type="PDBsum" id="6AT0"/>
<dbReference type="PDBsum" id="6MHA"/>
<dbReference type="SMR" id="P05205"/>
<dbReference type="BioGRID" id="60248">
    <property type="interactions" value="134"/>
</dbReference>
<dbReference type="DIP" id="DIP-21869N"/>
<dbReference type="ELM" id="P05205"/>
<dbReference type="FunCoup" id="P05205">
    <property type="interactions" value="183"/>
</dbReference>
<dbReference type="IntAct" id="P05205">
    <property type="interactions" value="233"/>
</dbReference>
<dbReference type="MINT" id="P05205"/>
<dbReference type="STRING" id="7227.FBpp0079252"/>
<dbReference type="GlyGen" id="P05205">
    <property type="glycosylation" value="1 site"/>
</dbReference>
<dbReference type="iPTMnet" id="P05205"/>
<dbReference type="PaxDb" id="7227-FBpp0079251"/>
<dbReference type="EnsemblMetazoa" id="FBtr0079635">
    <property type="protein sequence ID" value="FBpp0079251"/>
    <property type="gene ID" value="FBgn0003607"/>
</dbReference>
<dbReference type="EnsemblMetazoa" id="FBtr0079636">
    <property type="protein sequence ID" value="FBpp0079252"/>
    <property type="gene ID" value="FBgn0003607"/>
</dbReference>
<dbReference type="GeneID" id="34119"/>
<dbReference type="KEGG" id="dme:Dmel_CG8409"/>
<dbReference type="UCSC" id="CG8409-RB">
    <property type="organism name" value="d. melanogaster"/>
</dbReference>
<dbReference type="AGR" id="FB:FBgn0003607"/>
<dbReference type="CTD" id="34119"/>
<dbReference type="FlyBase" id="FBgn0003607">
    <property type="gene designation" value="Su(var)205"/>
</dbReference>
<dbReference type="VEuPathDB" id="VectorBase:FBgn0003607"/>
<dbReference type="eggNOG" id="KOG1911">
    <property type="taxonomic scope" value="Eukaryota"/>
</dbReference>
<dbReference type="GeneTree" id="ENSGT00940000154152"/>
<dbReference type="HOGENOM" id="CLU_045874_1_1_1"/>
<dbReference type="InParanoid" id="P05205"/>
<dbReference type="OMA" id="QVIAFYE"/>
<dbReference type="OrthoDB" id="433924at2759"/>
<dbReference type="PhylomeDB" id="P05205"/>
<dbReference type="SignaLink" id="P05205"/>
<dbReference type="BioGRID-ORCS" id="34119">
    <property type="hits" value="0 hits in 3 CRISPR screens"/>
</dbReference>
<dbReference type="CD-CODE" id="1CF1AEDA">
    <property type="entry name" value="Heterochromatin"/>
</dbReference>
<dbReference type="CD-CODE" id="AD0C696C">
    <property type="entry name" value="Synthetic Condensate 000198"/>
</dbReference>
<dbReference type="CD-CODE" id="E9C70067">
    <property type="entry name" value="Synthetic Condensate 000299"/>
</dbReference>
<dbReference type="ChiTaRS" id="Su(var)205">
    <property type="organism name" value="fly"/>
</dbReference>
<dbReference type="EvolutionaryTrace" id="P05205"/>
<dbReference type="GenomeRNAi" id="34119"/>
<dbReference type="PRO" id="PR:P05205"/>
<dbReference type="Proteomes" id="UP000000803">
    <property type="component" value="Chromosome 2L"/>
</dbReference>
<dbReference type="Bgee" id="FBgn0003607">
    <property type="expression patterns" value="Expressed in eye disc (Drosophila) and 224 other cell types or tissues"/>
</dbReference>
<dbReference type="GO" id="GO:0010369">
    <property type="term" value="C:chromocenter"/>
    <property type="evidence" value="ECO:0000314"/>
    <property type="project" value="FlyBase"/>
</dbReference>
<dbReference type="GO" id="GO:0005694">
    <property type="term" value="C:chromosome"/>
    <property type="evidence" value="ECO:0000314"/>
    <property type="project" value="FlyBase"/>
</dbReference>
<dbReference type="GO" id="GO:0000775">
    <property type="term" value="C:chromosome, centromeric region"/>
    <property type="evidence" value="ECO:0000303"/>
    <property type="project" value="FlyBase"/>
</dbReference>
<dbReference type="GO" id="GO:0000781">
    <property type="term" value="C:chromosome, telomeric region"/>
    <property type="evidence" value="ECO:0000314"/>
    <property type="project" value="FlyBase"/>
</dbReference>
<dbReference type="GO" id="GO:0000793">
    <property type="term" value="C:condensed chromosome"/>
    <property type="evidence" value="ECO:0000314"/>
    <property type="project" value="FlyBase"/>
</dbReference>
<dbReference type="GO" id="GO:0000779">
    <property type="term" value="C:condensed chromosome, centromeric region"/>
    <property type="evidence" value="ECO:0000314"/>
    <property type="project" value="FlyBase"/>
</dbReference>
<dbReference type="GO" id="GO:0000791">
    <property type="term" value="C:euchromatin"/>
    <property type="evidence" value="ECO:0000314"/>
    <property type="project" value="FlyBase"/>
</dbReference>
<dbReference type="GO" id="GO:0000792">
    <property type="term" value="C:heterochromatin"/>
    <property type="evidence" value="ECO:0000314"/>
    <property type="project" value="FlyBase"/>
</dbReference>
<dbReference type="GO" id="GO:0005654">
    <property type="term" value="C:nucleoplasm"/>
    <property type="evidence" value="ECO:0007669"/>
    <property type="project" value="UniProtKB-SubCell"/>
</dbReference>
<dbReference type="GO" id="GO:0005634">
    <property type="term" value="C:nucleus"/>
    <property type="evidence" value="ECO:0000314"/>
    <property type="project" value="UniProtKB"/>
</dbReference>
<dbReference type="GO" id="GO:0005721">
    <property type="term" value="C:pericentric heterochromatin"/>
    <property type="evidence" value="ECO:0000314"/>
    <property type="project" value="FlyBase"/>
</dbReference>
<dbReference type="GO" id="GO:0005700">
    <property type="term" value="C:polytene chromosome"/>
    <property type="evidence" value="ECO:0000314"/>
    <property type="project" value="FlyBase"/>
</dbReference>
<dbReference type="GO" id="GO:0005701">
    <property type="term" value="C:polytene chromosome chromocenter"/>
    <property type="evidence" value="ECO:0000314"/>
    <property type="project" value="FlyBase"/>
</dbReference>
<dbReference type="GO" id="GO:0005703">
    <property type="term" value="C:polytene chromosome puff"/>
    <property type="evidence" value="ECO:0000304"/>
    <property type="project" value="FlyBase"/>
</dbReference>
<dbReference type="GO" id="GO:0003682">
    <property type="term" value="F:chromatin binding"/>
    <property type="evidence" value="ECO:0000314"/>
    <property type="project" value="FlyBase"/>
</dbReference>
<dbReference type="GO" id="GO:0042393">
    <property type="term" value="F:histone binding"/>
    <property type="evidence" value="ECO:0000303"/>
    <property type="project" value="FlyBase"/>
</dbReference>
<dbReference type="GO" id="GO:0030544">
    <property type="term" value="F:Hsp70 protein binding"/>
    <property type="evidence" value="ECO:0000314"/>
    <property type="project" value="CAFA"/>
</dbReference>
<dbReference type="GO" id="GO:0035064">
    <property type="term" value="F:methylated histone binding"/>
    <property type="evidence" value="ECO:0000318"/>
    <property type="project" value="GO_Central"/>
</dbReference>
<dbReference type="GO" id="GO:0003729">
    <property type="term" value="F:mRNA binding"/>
    <property type="evidence" value="ECO:0000303"/>
    <property type="project" value="FlyBase"/>
</dbReference>
<dbReference type="GO" id="GO:0044877">
    <property type="term" value="F:protein-containing complex binding"/>
    <property type="evidence" value="ECO:0000314"/>
    <property type="project" value="CAFA"/>
</dbReference>
<dbReference type="GO" id="GO:0030674">
    <property type="term" value="F:protein-macromolecule adaptor activity"/>
    <property type="evidence" value="ECO:0000314"/>
    <property type="project" value="CAFA"/>
</dbReference>
<dbReference type="GO" id="GO:0000182">
    <property type="term" value="F:rDNA binding"/>
    <property type="evidence" value="ECO:0000314"/>
    <property type="project" value="FlyBase"/>
</dbReference>
<dbReference type="GO" id="GO:0003723">
    <property type="term" value="F:RNA binding"/>
    <property type="evidence" value="ECO:0000314"/>
    <property type="project" value="FlyBase"/>
</dbReference>
<dbReference type="GO" id="GO:0070063">
    <property type="term" value="F:RNA polymerase binding"/>
    <property type="evidence" value="ECO:0000314"/>
    <property type="project" value="CAFA"/>
</dbReference>
<dbReference type="GO" id="GO:0099122">
    <property type="term" value="F:RNA polymerase II C-terminal domain binding"/>
    <property type="evidence" value="ECO:0000314"/>
    <property type="project" value="CAFA"/>
</dbReference>
<dbReference type="GO" id="GO:0003696">
    <property type="term" value="F:satellite DNA binding"/>
    <property type="evidence" value="ECO:0000314"/>
    <property type="project" value="FlyBase"/>
</dbReference>
<dbReference type="GO" id="GO:0051276">
    <property type="term" value="P:chromosome organization"/>
    <property type="evidence" value="ECO:0000315"/>
    <property type="project" value="FlyBase"/>
</dbReference>
<dbReference type="GO" id="GO:0031507">
    <property type="term" value="P:heterochromatin formation"/>
    <property type="evidence" value="ECO:0000314"/>
    <property type="project" value="FlyBase"/>
</dbReference>
<dbReference type="GO" id="GO:0000278">
    <property type="term" value="P:mitotic cell cycle"/>
    <property type="evidence" value="ECO:0000314"/>
    <property type="project" value="CACAO"/>
</dbReference>
<dbReference type="GO" id="GO:0045892">
    <property type="term" value="P:negative regulation of DNA-templated transcription"/>
    <property type="evidence" value="ECO:0000303"/>
    <property type="project" value="FlyBase"/>
</dbReference>
<dbReference type="GO" id="GO:0031508">
    <property type="term" value="P:pericentric heterochromatin formation"/>
    <property type="evidence" value="ECO:0007001"/>
    <property type="project" value="FlyBase"/>
</dbReference>
<dbReference type="GO" id="GO:0045893">
    <property type="term" value="P:positive regulation of DNA-templated transcription"/>
    <property type="evidence" value="ECO:0000304"/>
    <property type="project" value="FlyBase"/>
</dbReference>
<dbReference type="GO" id="GO:1905646">
    <property type="term" value="P:positive regulation of FACT complex assembly"/>
    <property type="evidence" value="ECO:0000314"/>
    <property type="project" value="CAFA"/>
</dbReference>
<dbReference type="GO" id="GO:0045944">
    <property type="term" value="P:positive regulation of transcription by RNA polymerase II"/>
    <property type="evidence" value="ECO:0000315"/>
    <property type="project" value="UniProtKB"/>
</dbReference>
<dbReference type="GO" id="GO:1905632">
    <property type="term" value="P:protein localization to euchromatin"/>
    <property type="evidence" value="ECO:0000314"/>
    <property type="project" value="CAFA"/>
</dbReference>
<dbReference type="GO" id="GO:0006355">
    <property type="term" value="P:regulation of DNA-templated transcription"/>
    <property type="evidence" value="ECO:0000315"/>
    <property type="project" value="FlyBase"/>
</dbReference>
<dbReference type="GO" id="GO:1905634">
    <property type="term" value="P:regulation of protein localization to chromatin"/>
    <property type="evidence" value="ECO:0000315"/>
    <property type="project" value="CAFA"/>
</dbReference>
<dbReference type="GO" id="GO:0141194">
    <property type="term" value="P:siRNA-mediated heterochromatin formation"/>
    <property type="evidence" value="ECO:0000316"/>
    <property type="project" value="FlyBase"/>
</dbReference>
<dbReference type="GO" id="GO:0000723">
    <property type="term" value="P:telomere maintenance"/>
    <property type="evidence" value="ECO:0000315"/>
    <property type="project" value="FlyBase"/>
</dbReference>
<dbReference type="GO" id="GO:0141006">
    <property type="term" value="P:transposable element silencing by piRNA-mediated heterochromatin formation"/>
    <property type="evidence" value="ECO:0000315"/>
    <property type="project" value="FlyBase"/>
</dbReference>
<dbReference type="CDD" id="cd18653">
    <property type="entry name" value="CD_HP1a_insect"/>
    <property type="match status" value="1"/>
</dbReference>
<dbReference type="CDD" id="cd18658">
    <property type="entry name" value="CSD_HP1a_insect"/>
    <property type="match status" value="1"/>
</dbReference>
<dbReference type="DisProt" id="DP02865"/>
<dbReference type="FunFam" id="2.40.50.40:FF:000007">
    <property type="entry name" value="Chromobox protein homolog 1"/>
    <property type="match status" value="1"/>
</dbReference>
<dbReference type="FunFam" id="2.40.50.40:FF:000031">
    <property type="entry name" value="Heterochromatin protein 1"/>
    <property type="match status" value="1"/>
</dbReference>
<dbReference type="Gene3D" id="2.40.50.40">
    <property type="match status" value="2"/>
</dbReference>
<dbReference type="IDEAL" id="IID50064"/>
<dbReference type="InterPro" id="IPR016197">
    <property type="entry name" value="Chromo-like_dom_sf"/>
</dbReference>
<dbReference type="InterPro" id="IPR000953">
    <property type="entry name" value="Chromo/chromo_shadow_dom"/>
</dbReference>
<dbReference type="InterPro" id="IPR017984">
    <property type="entry name" value="Chromo_dom_subgr"/>
</dbReference>
<dbReference type="InterPro" id="IPR023780">
    <property type="entry name" value="Chromo_domain"/>
</dbReference>
<dbReference type="InterPro" id="IPR008251">
    <property type="entry name" value="Chromo_shadow_dom"/>
</dbReference>
<dbReference type="InterPro" id="IPR023779">
    <property type="entry name" value="Chromodomain_CS"/>
</dbReference>
<dbReference type="InterPro" id="IPR051219">
    <property type="entry name" value="Heterochromatin_chromo-domain"/>
</dbReference>
<dbReference type="PANTHER" id="PTHR22812">
    <property type="entry name" value="CHROMOBOX PROTEIN"/>
    <property type="match status" value="1"/>
</dbReference>
<dbReference type="Pfam" id="PF00385">
    <property type="entry name" value="Chromo"/>
    <property type="match status" value="1"/>
</dbReference>
<dbReference type="Pfam" id="PF01393">
    <property type="entry name" value="Chromo_shadow"/>
    <property type="match status" value="1"/>
</dbReference>
<dbReference type="PRINTS" id="PR00504">
    <property type="entry name" value="CHROMODOMAIN"/>
</dbReference>
<dbReference type="SMART" id="SM00298">
    <property type="entry name" value="CHROMO"/>
    <property type="match status" value="2"/>
</dbReference>
<dbReference type="SMART" id="SM00300">
    <property type="entry name" value="ChSh"/>
    <property type="match status" value="1"/>
</dbReference>
<dbReference type="SUPFAM" id="SSF54160">
    <property type="entry name" value="Chromo domain-like"/>
    <property type="match status" value="2"/>
</dbReference>
<dbReference type="PROSITE" id="PS00598">
    <property type="entry name" value="CHROMO_1"/>
    <property type="match status" value="1"/>
</dbReference>
<dbReference type="PROSITE" id="PS50013">
    <property type="entry name" value="CHROMO_2"/>
    <property type="match status" value="2"/>
</dbReference>
<protein>
    <recommendedName>
        <fullName>Heterochromatin protein 1</fullName>
        <shortName>HP1</shortName>
    </recommendedName>
    <alternativeName>
        <fullName>Non-histone chromosomal protein C1A9 antigen</fullName>
    </alternativeName>
</protein>
<proteinExistence type="evidence at protein level"/>
<accession>P05205</accession>
<accession>A4V0F1</accession>
<accession>B6UVR4</accession>
<accession>B6UVS1</accession>
<accession>B6UVS2</accession>
<accession>B6UVS3</accession>
<accession>B6UVT2</accession>
<accession>B6UVT6</accession>
<accession>B6UVT7</accession>
<accession>Q9VLR6</accession>
<gene>
    <name evidence="22" type="primary">Su(var)205</name>
    <name evidence="22" type="synonym">HP1</name>
    <name evidence="22" type="synonym">HP1a</name>
    <name evidence="22" type="synonym">Su(var)2-5</name>
    <name evidence="22" type="ORF">CG8409</name>
</gene>
<evidence type="ECO:0000255" key="1">
    <source>
        <dbReference type="PROSITE-ProRule" id="PRU00053"/>
    </source>
</evidence>
<evidence type="ECO:0000256" key="2">
    <source>
        <dbReference type="SAM" id="MobiDB-lite"/>
    </source>
</evidence>
<evidence type="ECO:0000269" key="3">
    <source>
    </source>
</evidence>
<evidence type="ECO:0000269" key="4">
    <source>
    </source>
</evidence>
<evidence type="ECO:0000269" key="5">
    <source>
    </source>
</evidence>
<evidence type="ECO:0000269" key="6">
    <source>
    </source>
</evidence>
<evidence type="ECO:0000269" key="7">
    <source>
    </source>
</evidence>
<evidence type="ECO:0000269" key="8">
    <source>
    </source>
</evidence>
<evidence type="ECO:0000269" key="9">
    <source>
    </source>
</evidence>
<evidence type="ECO:0000269" key="10">
    <source>
    </source>
</evidence>
<evidence type="ECO:0000269" key="11">
    <source>
    </source>
</evidence>
<evidence type="ECO:0000269" key="12">
    <source>
    </source>
</evidence>
<evidence type="ECO:0000269" key="13">
    <source>
    </source>
</evidence>
<evidence type="ECO:0000269" key="14">
    <source>
    </source>
</evidence>
<evidence type="ECO:0000269" key="15">
    <source>
    </source>
</evidence>
<evidence type="ECO:0000269" key="16">
    <source>
    </source>
</evidence>
<evidence type="ECO:0000269" key="17">
    <source>
    </source>
</evidence>
<evidence type="ECO:0000269" key="18">
    <source>
    </source>
</evidence>
<evidence type="ECO:0000269" key="19">
    <source>
    </source>
</evidence>
<evidence type="ECO:0000269" key="20">
    <source>
    </source>
</evidence>
<evidence type="ECO:0000305" key="21"/>
<evidence type="ECO:0000312" key="22">
    <source>
        <dbReference type="FlyBase" id="FBgn0003607"/>
    </source>
</evidence>
<evidence type="ECO:0000312" key="23">
    <source>
        <dbReference type="Proteomes" id="UP000000803"/>
    </source>
</evidence>
<evidence type="ECO:0007744" key="24">
    <source>
        <dbReference type="PDB" id="1KNA"/>
    </source>
</evidence>
<evidence type="ECO:0007744" key="25">
    <source>
        <dbReference type="PDB" id="1KNE"/>
    </source>
</evidence>
<evidence type="ECO:0007829" key="26">
    <source>
        <dbReference type="PDB" id="3P7J"/>
    </source>
</evidence>
<evidence type="ECO:0007829" key="27">
    <source>
        <dbReference type="PDB" id="6AT0"/>
    </source>
</evidence>
<keyword id="KW-0002">3D-structure</keyword>
<keyword id="KW-0156">Chromatin regulator</keyword>
<keyword id="KW-0158">Chromosome</keyword>
<keyword id="KW-0539">Nucleus</keyword>
<keyword id="KW-0597">Phosphoprotein</keyword>
<keyword id="KW-1185">Reference proteome</keyword>
<keyword id="KW-0677">Repeat</keyword>
<keyword id="KW-0678">Repressor</keyword>
<keyword id="KW-0779">Telomere</keyword>
<keyword id="KW-0804">Transcription</keyword>
<keyword id="KW-0805">Transcription regulation</keyword>
<name>HP1_DROME</name>
<comment type="function">
    <text evidence="4 5 7 16 19">Structural component of heterochromatin, involved in gene repression and the modification of position-effect-variegation (PubMed:26389589). Recognizes and binds histone H3 tails methylated at 'Lys-9', leading to epigenetic repression (PubMed:11859155, PubMed:26389589). Stabilizes chromatin-associated RNAs probably by binding to them and thereby preventing their degradation (PubMed:26389589). Associates with, and may be a part of, the HipHop-HOAP complex that recruits the MTV complex to form the terminin telomere-capping complex, which binds to chromosome ends in a sequence-independent manner and prevents telomere fusion (PubMed:12510197, PubMed:20057353). Telomere capping is independent of the origin recognition complex (ORC) (PubMed:12510197).</text>
</comment>
<comment type="subunit">
    <text evidence="3 5 6 8 9 11 14 16 19">Homodimer (PubMed:17875665). Probably associates with Su(var)3-9 (PubMed:17875665). Interacts with Mcm10 (PubMed:12808023). Interacts (via chromoshadow domain) with piwi (via N-terminal region) (PubMed:17875665). Interacts with Rrp6 (PubMed:26389589). Associates with and may be part of the HipHop-HOAP telomere capping complex but is not required for its stability or telomere localization (PubMed:20057353). Interacts (via the chromo domain 2 (chromoshadow domain) and the hinge region between chromo domains 1 and 2) with cav/HOAP (via C-terminus); the interaction is direct (PubMed:11408576, PubMed:12826664, PubMed:19181850). Each molecule of cav/HOAP interacts with 2 molecules of Su(var)205/HP1 (PubMed:12826664). Interacts with HipHop (via N-terminus) (PubMed:20057353). Interacts with moi/modigliani; the interaction is direct (PubMed:19181850). Interacts (via chromo domain 1) with His3/histone 3 (via N-terminal tail methylated at 'Lys-10'); the interaction is direct (PubMed:11859155).</text>
</comment>
<comment type="interaction">
    <interactant intactId="EBI-155532">
        <id>P05205</id>
    </interactant>
    <interactant intactId="EBI-94769">
        <id>Q9W0Z5</id>
        <label>Atf-2</label>
    </interactant>
    <organismsDiffer>false</organismsDiffer>
    <experiments>3</experiments>
</comment>
<comment type="interaction">
    <interactant intactId="EBI-155532">
        <id>P05205</id>
    </interactant>
    <interactant intactId="EBI-104820">
        <id>Q95RV2</id>
        <label>cav</label>
    </interactant>
    <organismsDiffer>false</organismsDiffer>
    <experiments>5</experiments>
</comment>
<comment type="interaction">
    <interactant intactId="EBI-155532">
        <id>P05205</id>
    </interactant>
    <interactant intactId="EBI-151629">
        <id>P02255</id>
        <label>His1:CG33843</label>
    </interactant>
    <organismsDiffer>false</organismsDiffer>
    <experiments>2</experiments>
</comment>
<comment type="interaction">
    <interactant intactId="EBI-155532">
        <id>P05205</id>
    </interactant>
    <interactant intactId="EBI-522090">
        <id>P02299</id>
        <label>His3:CG33854</label>
    </interactant>
    <organismsDiffer>false</organismsDiffer>
    <experiments>3</experiments>
</comment>
<comment type="interaction">
    <interactant intactId="EBI-155532">
        <id>P05205</id>
    </interactant>
    <interactant intactId="EBI-89649">
        <id>Q8IQ92</id>
        <label>HP4</label>
    </interactant>
    <organismsDiffer>false</organismsDiffer>
    <experiments>4</experiments>
</comment>
<comment type="interaction">
    <interactant intactId="EBI-155532">
        <id>P05205</id>
    </interactant>
    <interactant intactId="EBI-91264">
        <id>Q9VIE6</id>
        <label>Mcm10</label>
    </interactant>
    <organismsDiffer>false</organismsDiffer>
    <experiments>2</experiments>
</comment>
<comment type="interaction">
    <interactant intactId="EBI-155532">
        <id>P05205</id>
    </interactant>
    <interactant intactId="EBI-15755079">
        <id>B7Z0L8</id>
        <label>moi</label>
    </interactant>
    <organismsDiffer>false</organismsDiffer>
    <experiments>3</experiments>
</comment>
<comment type="interaction">
    <interactant intactId="EBI-155532">
        <id>P05205</id>
    </interactant>
    <interactant intactId="EBI-141895">
        <id>Q9VEF0</id>
        <label>Odj</label>
    </interactant>
    <organismsDiffer>false</organismsDiffer>
    <experiments>3</experiments>
</comment>
<comment type="interaction">
    <interactant intactId="EBI-155532">
        <id>P05205</id>
    </interactant>
    <interactant intactId="EBI-110378">
        <id>P45975</id>
        <label>Su(var)3-9</label>
    </interactant>
    <organismsDiffer>false</organismsDiffer>
    <experiments>3</experiments>
</comment>
<comment type="subcellular location">
    <subcellularLocation>
        <location evidence="11 14 17 18 19 20">Nucleus</location>
    </subcellularLocation>
    <subcellularLocation>
        <location evidence="20">Nucleus</location>
        <location evidence="20">Nucleoplasm</location>
    </subcellularLocation>
    <subcellularLocation>
        <location evidence="9 11 14 17 18 19 20">Chromosome</location>
    </subcellularLocation>
    <subcellularLocation>
        <location evidence="9 14 15 17 18">Chromosome</location>
        <location evidence="9 14 15 17 18">Telomere</location>
    </subcellularLocation>
    <text evidence="9 14 15 17 18 20">Colocalizes with Arp6 on pericentric heterochromatin (PubMed:12826664, PubMed:9378752). Telomere localization is not dependent on peo/pendolino, ver/verrocchio or moi/modigliani (PubMed:19181850, PubMed:19240120, PubMed:20679394, PubMed:26110638).</text>
</comment>
<comment type="tissue specificity">
    <text evidence="19">Salivary gland (at protein level).</text>
</comment>
<organism evidence="23">
    <name type="scientific">Drosophila melanogaster</name>
    <name type="common">Fruit fly</name>
    <dbReference type="NCBI Taxonomy" id="7227"/>
    <lineage>
        <taxon>Eukaryota</taxon>
        <taxon>Metazoa</taxon>
        <taxon>Ecdysozoa</taxon>
        <taxon>Arthropoda</taxon>
        <taxon>Hexapoda</taxon>
        <taxon>Insecta</taxon>
        <taxon>Pterygota</taxon>
        <taxon>Neoptera</taxon>
        <taxon>Endopterygota</taxon>
        <taxon>Diptera</taxon>
        <taxon>Brachycera</taxon>
        <taxon>Muscomorpha</taxon>
        <taxon>Ephydroidea</taxon>
        <taxon>Drosophilidae</taxon>
        <taxon>Drosophila</taxon>
        <taxon>Sophophora</taxon>
    </lineage>
</organism>
<sequence>MGKKIDNPESSAKVSDAEEEEEEYAVEKIIDRRVRKGKVEYYLKWKGYPETENTWEPENNLDCQDLIQQYEASRKDEEKSAASKKDRPSSSAKAKETQGRASSSTSTASKRKSEEPTAPSGNKSKRTTDAEQDTIPVSGSTGFDRGLEAEKILGASDNNGRLTFLIQFKGVDQAEMVPSSVANEKIPRMVIHFYEERLSWYSDNED</sequence>
<feature type="chain" id="PRO_0000080197" description="Heterochromatin protein 1">
    <location>
        <begin position="1"/>
        <end position="206"/>
    </location>
</feature>
<feature type="domain" description="Chromo 1" evidence="1">
    <location>
        <begin position="24"/>
        <end position="82"/>
    </location>
</feature>
<feature type="domain" description="Chromo 2" evidence="1">
    <location>
        <begin position="147"/>
        <end position="205"/>
    </location>
</feature>
<feature type="region of interest" description="Disordered" evidence="2">
    <location>
        <begin position="1"/>
        <end position="24"/>
    </location>
</feature>
<feature type="region of interest" description="Disordered" evidence="2">
    <location>
        <begin position="47"/>
        <end position="145"/>
    </location>
</feature>
<feature type="region of interest" description="Binds to Su(var)39">
    <location>
        <begin position="95"/>
        <end position="206"/>
    </location>
</feature>
<feature type="compositionally biased region" description="Low complexity" evidence="2">
    <location>
        <begin position="50"/>
        <end position="60"/>
    </location>
</feature>
<feature type="compositionally biased region" description="Basic and acidic residues" evidence="2">
    <location>
        <begin position="72"/>
        <end position="98"/>
    </location>
</feature>
<feature type="site" description="Histone H3K9me2 binding">
    <location>
        <position position="24"/>
    </location>
</feature>
<feature type="site" description="Histone H3K9me2 binding">
    <location>
        <position position="45"/>
    </location>
</feature>
<feature type="site" description="Histone H3K9me2 binding">
    <location>
        <position position="48"/>
    </location>
</feature>
<feature type="modified residue" description="Phosphoserine" evidence="12">
    <location>
        <position position="11"/>
    </location>
</feature>
<feature type="modified residue" description="Phosphoserine" evidence="10 12">
    <location>
        <position position="15"/>
    </location>
</feature>
<feature type="modified residue" description="Phosphoserine" evidence="12">
    <location>
        <position position="102"/>
    </location>
</feature>
<feature type="modified residue" description="Phosphoserine" evidence="12">
    <location>
        <position position="103"/>
    </location>
</feature>
<feature type="modified residue" description="Phosphoserine" evidence="12">
    <location>
        <position position="113"/>
    </location>
</feature>
<feature type="modified residue" description="Phosphothreonine" evidence="10">
    <location>
        <position position="127"/>
    </location>
</feature>
<feature type="modified residue" description="Phosphothreonine" evidence="10 12">
    <location>
        <position position="128"/>
    </location>
</feature>
<feature type="modified residue" description="Phosphothreonine" evidence="10">
    <location>
        <position position="134"/>
    </location>
</feature>
<feature type="sequence variant" description="In strain: NC322, NC358 and NC359." evidence="13">
    <original>T</original>
    <variation>A</variation>
    <location>
        <position position="105"/>
    </location>
</feature>
<feature type="sequence variant" description="In strain: NC390." evidence="13">
    <original>R</original>
    <variation>C</variation>
    <location>
        <position position="126"/>
    </location>
</feature>
<feature type="sequence variant" description="In strain: MW25." evidence="13">
    <original>T</original>
    <variation>S</variation>
    <location>
        <position position="134"/>
    </location>
</feature>
<feature type="mutagenesis site" description="Impairs chromo domain folding and histone H3 binding. Does not affect piwi binding." evidence="4 11">
    <original>V</original>
    <variation>M</variation>
    <location>
        <position position="26"/>
    </location>
</feature>
<feature type="mutagenesis site" description="Abolishes piwi binding." evidence="11">
    <original>I</original>
    <variation>E</variation>
    <location>
        <position position="191"/>
    </location>
</feature>
<feature type="mutagenesis site" description="Abolishes piwi binding." evidence="11">
    <original>W</original>
    <variation>A</variation>
    <location>
        <position position="200"/>
    </location>
</feature>
<feature type="strand" evidence="27">
    <location>
        <begin position="23"/>
        <end position="35"/>
    </location>
</feature>
<feature type="strand" evidence="27">
    <location>
        <begin position="38"/>
        <end position="45"/>
    </location>
</feature>
<feature type="helix" evidence="27">
    <location>
        <begin position="50"/>
        <end position="52"/>
    </location>
</feature>
<feature type="strand" evidence="27">
    <location>
        <begin position="54"/>
        <end position="57"/>
    </location>
</feature>
<feature type="helix" evidence="27">
    <location>
        <begin position="58"/>
        <end position="60"/>
    </location>
</feature>
<feature type="helix" evidence="27">
    <location>
        <begin position="64"/>
        <end position="73"/>
    </location>
</feature>
<feature type="turn" evidence="26">
    <location>
        <begin position="142"/>
        <end position="146"/>
    </location>
</feature>
<feature type="strand" evidence="26">
    <location>
        <begin position="149"/>
        <end position="158"/>
    </location>
</feature>
<feature type="strand" evidence="26">
    <location>
        <begin position="161"/>
        <end position="168"/>
    </location>
</feature>
<feature type="strand" evidence="26">
    <location>
        <begin position="175"/>
        <end position="178"/>
    </location>
</feature>
<feature type="helix" evidence="26">
    <location>
        <begin position="179"/>
        <end position="185"/>
    </location>
</feature>
<feature type="helix" evidence="26">
    <location>
        <begin position="187"/>
        <end position="196"/>
    </location>
</feature>